<keyword id="KW-1003">Cell membrane</keyword>
<keyword id="KW-0967">Endosome</keyword>
<keyword id="KW-0325">Glycoprotein</keyword>
<keyword id="KW-0333">Golgi apparatus</keyword>
<keyword id="KW-0472">Membrane</keyword>
<keyword id="KW-0597">Phosphoprotein</keyword>
<keyword id="KW-1185">Reference proteome</keyword>
<keyword id="KW-0732">Signal</keyword>
<keyword id="KW-0812">Transmembrane</keyword>
<keyword id="KW-1133">Transmembrane helix</keyword>
<feature type="signal peptide" evidence="3">
    <location>
        <begin position="1"/>
        <end position="20"/>
    </location>
</feature>
<feature type="chain" id="PRO_0000045499" description="Prostate androgen-regulated mucin-like protein 1 homolog">
    <location>
        <begin position="21"/>
        <end position="296"/>
    </location>
</feature>
<feature type="topological domain" description="Extracellular" evidence="3">
    <location>
        <begin position="21"/>
        <end position="244"/>
    </location>
</feature>
<feature type="transmembrane region" description="Helical" evidence="3">
    <location>
        <begin position="245"/>
        <end position="265"/>
    </location>
</feature>
<feature type="topological domain" description="Cytoplasmic" evidence="3">
    <location>
        <begin position="266"/>
        <end position="296"/>
    </location>
</feature>
<feature type="region of interest" description="Disordered" evidence="4">
    <location>
        <begin position="72"/>
        <end position="220"/>
    </location>
</feature>
<feature type="compositionally biased region" description="Basic and acidic residues" evidence="4">
    <location>
        <begin position="78"/>
        <end position="95"/>
    </location>
</feature>
<feature type="compositionally biased region" description="Polar residues" evidence="4">
    <location>
        <begin position="96"/>
        <end position="110"/>
    </location>
</feature>
<feature type="compositionally biased region" description="Low complexity" evidence="4">
    <location>
        <begin position="139"/>
        <end position="167"/>
    </location>
</feature>
<feature type="compositionally biased region" description="Polar residues" evidence="4">
    <location>
        <begin position="168"/>
        <end position="177"/>
    </location>
</feature>
<feature type="compositionally biased region" description="Basic and acidic residues" evidence="4">
    <location>
        <begin position="206"/>
        <end position="217"/>
    </location>
</feature>
<feature type="modified residue" description="Phosphoserine" evidence="2">
    <location>
        <position position="284"/>
    </location>
</feature>
<feature type="glycosylation site" description="N-linked (GlcNAc...) asparagine" evidence="3">
    <location>
        <position position="61"/>
    </location>
</feature>
<feature type="glycosylation site" description="N-linked (GlcNAc...) asparagine" evidence="3">
    <location>
        <position position="95"/>
    </location>
</feature>
<feature type="glycosylation site" description="N-linked (GlcNAc...) asparagine" evidence="3">
    <location>
        <position position="169"/>
    </location>
</feature>
<feature type="sequence conflict" description="In Ref. 2; BAE28465." evidence="5" ref="2">
    <original>L</original>
    <variation>I</variation>
    <location>
        <position position="122"/>
    </location>
</feature>
<feature type="sequence conflict" description="In Ref. 2; BAE36224." evidence="5" ref="2">
    <original>T</original>
    <variation>I</variation>
    <location>
        <position position="150"/>
    </location>
</feature>
<dbReference type="EMBL" id="EF564364">
    <property type="protein sequence ID" value="ABQ42567.1"/>
    <property type="molecule type" value="mRNA"/>
</dbReference>
<dbReference type="EMBL" id="AK078943">
    <property type="protein sequence ID" value="BAC37472.1"/>
    <property type="molecule type" value="mRNA"/>
</dbReference>
<dbReference type="EMBL" id="AK148300">
    <property type="protein sequence ID" value="BAE28465.1"/>
    <property type="molecule type" value="mRNA"/>
</dbReference>
<dbReference type="EMBL" id="AK161172">
    <property type="protein sequence ID" value="BAE36224.1"/>
    <property type="molecule type" value="mRNA"/>
</dbReference>
<dbReference type="EMBL" id="AK167402">
    <property type="protein sequence ID" value="BAE39491.1"/>
    <property type="molecule type" value="mRNA"/>
</dbReference>
<dbReference type="EMBL" id="CH466617">
    <property type="protein sequence ID" value="EDL05291.1"/>
    <property type="molecule type" value="Genomic_DNA"/>
</dbReference>
<dbReference type="EMBL" id="BC006604">
    <property type="protein sequence ID" value="AAH06604.1"/>
    <property type="molecule type" value="mRNA"/>
</dbReference>
<dbReference type="CCDS" id="CCDS39146.1"/>
<dbReference type="RefSeq" id="NP_663537.1">
    <property type="nucleotide sequence ID" value="NM_145562.2"/>
</dbReference>
<dbReference type="SMR" id="Q923D3"/>
<dbReference type="FunCoup" id="Q923D3">
    <property type="interactions" value="535"/>
</dbReference>
<dbReference type="STRING" id="10090.ENSMUSP00000042844"/>
<dbReference type="GlyCosmos" id="Q923D3">
    <property type="glycosylation" value="3 sites, No reported glycans"/>
</dbReference>
<dbReference type="GlyGen" id="Q923D3">
    <property type="glycosylation" value="5 sites, 1 N-linked glycan (1 site)"/>
</dbReference>
<dbReference type="iPTMnet" id="Q923D3"/>
<dbReference type="PhosphoSitePlus" id="Q923D3"/>
<dbReference type="PaxDb" id="10090-ENSMUSP00000042844"/>
<dbReference type="ProteomicsDB" id="294159"/>
<dbReference type="Antibodypedia" id="52400">
    <property type="antibodies" value="32 antibodies from 11 providers"/>
</dbReference>
<dbReference type="DNASU" id="231440"/>
<dbReference type="Ensembl" id="ENSMUST00000040576.10">
    <property type="protein sequence ID" value="ENSMUSP00000042844.10"/>
    <property type="gene ID" value="ENSMUSG00000034981.10"/>
</dbReference>
<dbReference type="GeneID" id="231440"/>
<dbReference type="KEGG" id="mmu:231440"/>
<dbReference type="UCSC" id="uc008ybw.1">
    <property type="organism name" value="mouse"/>
</dbReference>
<dbReference type="AGR" id="MGI:2443349"/>
<dbReference type="CTD" id="25849"/>
<dbReference type="MGI" id="MGI:2443349">
    <property type="gene designation" value="Parm1"/>
</dbReference>
<dbReference type="VEuPathDB" id="HostDB:ENSMUSG00000034981"/>
<dbReference type="eggNOG" id="ENOG502S50N">
    <property type="taxonomic scope" value="Eukaryota"/>
</dbReference>
<dbReference type="GeneTree" id="ENSGT00390000014545"/>
<dbReference type="HOGENOM" id="CLU_898790_0_0_1"/>
<dbReference type="InParanoid" id="Q923D3"/>
<dbReference type="OMA" id="ASHWEGT"/>
<dbReference type="OrthoDB" id="8963138at2759"/>
<dbReference type="PhylomeDB" id="Q923D3"/>
<dbReference type="TreeFam" id="TF335903"/>
<dbReference type="BioGRID-ORCS" id="231440">
    <property type="hits" value="1 hit in 76 CRISPR screens"/>
</dbReference>
<dbReference type="ChiTaRS" id="Parm1">
    <property type="organism name" value="mouse"/>
</dbReference>
<dbReference type="PRO" id="PR:Q923D3"/>
<dbReference type="Proteomes" id="UP000000589">
    <property type="component" value="Chromosome 5"/>
</dbReference>
<dbReference type="RNAct" id="Q923D3">
    <property type="molecule type" value="protein"/>
</dbReference>
<dbReference type="Bgee" id="ENSMUSG00000034981">
    <property type="expression patterns" value="Expressed in gastrula and 293 other cell types or tissues"/>
</dbReference>
<dbReference type="GO" id="GO:0005829">
    <property type="term" value="C:cytosol"/>
    <property type="evidence" value="ECO:0007669"/>
    <property type="project" value="Ensembl"/>
</dbReference>
<dbReference type="GO" id="GO:0005769">
    <property type="term" value="C:early endosome"/>
    <property type="evidence" value="ECO:0000250"/>
    <property type="project" value="UniProtKB"/>
</dbReference>
<dbReference type="GO" id="GO:0010008">
    <property type="term" value="C:endosome membrane"/>
    <property type="evidence" value="ECO:0007669"/>
    <property type="project" value="UniProtKB-SubCell"/>
</dbReference>
<dbReference type="GO" id="GO:0005794">
    <property type="term" value="C:Golgi apparatus"/>
    <property type="evidence" value="ECO:0000250"/>
    <property type="project" value="UniProtKB"/>
</dbReference>
<dbReference type="GO" id="GO:0000139">
    <property type="term" value="C:Golgi membrane"/>
    <property type="evidence" value="ECO:0007669"/>
    <property type="project" value="UniProtKB-SubCell"/>
</dbReference>
<dbReference type="GO" id="GO:0005770">
    <property type="term" value="C:late endosome"/>
    <property type="evidence" value="ECO:0000250"/>
    <property type="project" value="UniProtKB"/>
</dbReference>
<dbReference type="GO" id="GO:0005654">
    <property type="term" value="C:nucleoplasm"/>
    <property type="evidence" value="ECO:0007669"/>
    <property type="project" value="Ensembl"/>
</dbReference>
<dbReference type="GO" id="GO:0005886">
    <property type="term" value="C:plasma membrane"/>
    <property type="evidence" value="ECO:0000250"/>
    <property type="project" value="UniProtKB"/>
</dbReference>
<dbReference type="InterPro" id="IPR031431">
    <property type="entry name" value="PARM1"/>
</dbReference>
<dbReference type="PANTHER" id="PTHR35453">
    <property type="entry name" value="PROSTATE ANDROGEN-REGULATED MUCIN-LIKE PROTEIN 1"/>
    <property type="match status" value="1"/>
</dbReference>
<dbReference type="PANTHER" id="PTHR35453:SF1">
    <property type="entry name" value="PROSTATE ANDROGEN-REGULATED MUCIN-LIKE PROTEIN 1"/>
    <property type="match status" value="1"/>
</dbReference>
<dbReference type="Pfam" id="PF17061">
    <property type="entry name" value="PARM"/>
    <property type="match status" value="1"/>
</dbReference>
<proteinExistence type="evidence at protein level"/>
<name>PARM1_MOUSE</name>
<organism>
    <name type="scientific">Mus musculus</name>
    <name type="common">Mouse</name>
    <dbReference type="NCBI Taxonomy" id="10090"/>
    <lineage>
        <taxon>Eukaryota</taxon>
        <taxon>Metazoa</taxon>
        <taxon>Chordata</taxon>
        <taxon>Craniata</taxon>
        <taxon>Vertebrata</taxon>
        <taxon>Euteleostomi</taxon>
        <taxon>Mammalia</taxon>
        <taxon>Eutheria</taxon>
        <taxon>Euarchontoglires</taxon>
        <taxon>Glires</taxon>
        <taxon>Rodentia</taxon>
        <taxon>Myomorpha</taxon>
        <taxon>Muroidea</taxon>
        <taxon>Muridae</taxon>
        <taxon>Murinae</taxon>
        <taxon>Mus</taxon>
        <taxon>Mus</taxon>
    </lineage>
</organism>
<accession>Q923D3</accession>
<accession>A5JSU4</accession>
<accession>Q3TTV0</accession>
<accession>Q3UFU4</accession>
<evidence type="ECO:0000250" key="1"/>
<evidence type="ECO:0000250" key="2">
    <source>
        <dbReference type="UniProtKB" id="Q6P9X9"/>
    </source>
</evidence>
<evidence type="ECO:0000255" key="3"/>
<evidence type="ECO:0000256" key="4">
    <source>
        <dbReference type="SAM" id="MobiDB-lite"/>
    </source>
</evidence>
<evidence type="ECO:0000305" key="5"/>
<protein>
    <recommendedName>
        <fullName>Prostate androgen-regulated mucin-like protein 1 homolog</fullName>
        <shortName>PARM-1</shortName>
    </recommendedName>
</protein>
<gene>
    <name type="primary">Parm1</name>
</gene>
<reference key="1">
    <citation type="submission" date="2007-04" db="EMBL/GenBank/DDBJ databases">
        <title>The expression of a mouse homolog of rat prostatic androgen-repressed message-1 (PARM-1), on adipogenesis.</title>
        <authorList>
            <person name="Roh S."/>
            <person name="Song S."/>
            <person name="Sasaki S."/>
        </authorList>
    </citation>
    <scope>NUCLEOTIDE SEQUENCE [MRNA]</scope>
    <source>
        <tissue>Adipose tissue</tissue>
    </source>
</reference>
<reference key="2">
    <citation type="journal article" date="2005" name="Science">
        <title>The transcriptional landscape of the mammalian genome.</title>
        <authorList>
            <person name="Carninci P."/>
            <person name="Kasukawa T."/>
            <person name="Katayama S."/>
            <person name="Gough J."/>
            <person name="Frith M.C."/>
            <person name="Maeda N."/>
            <person name="Oyama R."/>
            <person name="Ravasi T."/>
            <person name="Lenhard B."/>
            <person name="Wells C."/>
            <person name="Kodzius R."/>
            <person name="Shimokawa K."/>
            <person name="Bajic V.B."/>
            <person name="Brenner S.E."/>
            <person name="Batalov S."/>
            <person name="Forrest A.R."/>
            <person name="Zavolan M."/>
            <person name="Davis M.J."/>
            <person name="Wilming L.G."/>
            <person name="Aidinis V."/>
            <person name="Allen J.E."/>
            <person name="Ambesi-Impiombato A."/>
            <person name="Apweiler R."/>
            <person name="Aturaliya R.N."/>
            <person name="Bailey T.L."/>
            <person name="Bansal M."/>
            <person name="Baxter L."/>
            <person name="Beisel K.W."/>
            <person name="Bersano T."/>
            <person name="Bono H."/>
            <person name="Chalk A.M."/>
            <person name="Chiu K.P."/>
            <person name="Choudhary V."/>
            <person name="Christoffels A."/>
            <person name="Clutterbuck D.R."/>
            <person name="Crowe M.L."/>
            <person name="Dalla E."/>
            <person name="Dalrymple B.P."/>
            <person name="de Bono B."/>
            <person name="Della Gatta G."/>
            <person name="di Bernardo D."/>
            <person name="Down T."/>
            <person name="Engstrom P."/>
            <person name="Fagiolini M."/>
            <person name="Faulkner G."/>
            <person name="Fletcher C.F."/>
            <person name="Fukushima T."/>
            <person name="Furuno M."/>
            <person name="Futaki S."/>
            <person name="Gariboldi M."/>
            <person name="Georgii-Hemming P."/>
            <person name="Gingeras T.R."/>
            <person name="Gojobori T."/>
            <person name="Green R.E."/>
            <person name="Gustincich S."/>
            <person name="Harbers M."/>
            <person name="Hayashi Y."/>
            <person name="Hensch T.K."/>
            <person name="Hirokawa N."/>
            <person name="Hill D."/>
            <person name="Huminiecki L."/>
            <person name="Iacono M."/>
            <person name="Ikeo K."/>
            <person name="Iwama A."/>
            <person name="Ishikawa T."/>
            <person name="Jakt M."/>
            <person name="Kanapin A."/>
            <person name="Katoh M."/>
            <person name="Kawasawa Y."/>
            <person name="Kelso J."/>
            <person name="Kitamura H."/>
            <person name="Kitano H."/>
            <person name="Kollias G."/>
            <person name="Krishnan S.P."/>
            <person name="Kruger A."/>
            <person name="Kummerfeld S.K."/>
            <person name="Kurochkin I.V."/>
            <person name="Lareau L.F."/>
            <person name="Lazarevic D."/>
            <person name="Lipovich L."/>
            <person name="Liu J."/>
            <person name="Liuni S."/>
            <person name="McWilliam S."/>
            <person name="Madan Babu M."/>
            <person name="Madera M."/>
            <person name="Marchionni L."/>
            <person name="Matsuda H."/>
            <person name="Matsuzawa S."/>
            <person name="Miki H."/>
            <person name="Mignone F."/>
            <person name="Miyake S."/>
            <person name="Morris K."/>
            <person name="Mottagui-Tabar S."/>
            <person name="Mulder N."/>
            <person name="Nakano N."/>
            <person name="Nakauchi H."/>
            <person name="Ng P."/>
            <person name="Nilsson R."/>
            <person name="Nishiguchi S."/>
            <person name="Nishikawa S."/>
            <person name="Nori F."/>
            <person name="Ohara O."/>
            <person name="Okazaki Y."/>
            <person name="Orlando V."/>
            <person name="Pang K.C."/>
            <person name="Pavan W.J."/>
            <person name="Pavesi G."/>
            <person name="Pesole G."/>
            <person name="Petrovsky N."/>
            <person name="Piazza S."/>
            <person name="Reed J."/>
            <person name="Reid J.F."/>
            <person name="Ring B.Z."/>
            <person name="Ringwald M."/>
            <person name="Rost B."/>
            <person name="Ruan Y."/>
            <person name="Salzberg S.L."/>
            <person name="Sandelin A."/>
            <person name="Schneider C."/>
            <person name="Schoenbach C."/>
            <person name="Sekiguchi K."/>
            <person name="Semple C.A."/>
            <person name="Seno S."/>
            <person name="Sessa L."/>
            <person name="Sheng Y."/>
            <person name="Shibata Y."/>
            <person name="Shimada H."/>
            <person name="Shimada K."/>
            <person name="Silva D."/>
            <person name="Sinclair B."/>
            <person name="Sperling S."/>
            <person name="Stupka E."/>
            <person name="Sugiura K."/>
            <person name="Sultana R."/>
            <person name="Takenaka Y."/>
            <person name="Taki K."/>
            <person name="Tammoja K."/>
            <person name="Tan S.L."/>
            <person name="Tang S."/>
            <person name="Taylor M.S."/>
            <person name="Tegner J."/>
            <person name="Teichmann S.A."/>
            <person name="Ueda H.R."/>
            <person name="van Nimwegen E."/>
            <person name="Verardo R."/>
            <person name="Wei C.L."/>
            <person name="Yagi K."/>
            <person name="Yamanishi H."/>
            <person name="Zabarovsky E."/>
            <person name="Zhu S."/>
            <person name="Zimmer A."/>
            <person name="Hide W."/>
            <person name="Bult C."/>
            <person name="Grimmond S.M."/>
            <person name="Teasdale R.D."/>
            <person name="Liu E.T."/>
            <person name="Brusic V."/>
            <person name="Quackenbush J."/>
            <person name="Wahlestedt C."/>
            <person name="Mattick J.S."/>
            <person name="Hume D.A."/>
            <person name="Kai C."/>
            <person name="Sasaki D."/>
            <person name="Tomaru Y."/>
            <person name="Fukuda S."/>
            <person name="Kanamori-Katayama M."/>
            <person name="Suzuki M."/>
            <person name="Aoki J."/>
            <person name="Arakawa T."/>
            <person name="Iida J."/>
            <person name="Imamura K."/>
            <person name="Itoh M."/>
            <person name="Kato T."/>
            <person name="Kawaji H."/>
            <person name="Kawagashira N."/>
            <person name="Kawashima T."/>
            <person name="Kojima M."/>
            <person name="Kondo S."/>
            <person name="Konno H."/>
            <person name="Nakano K."/>
            <person name="Ninomiya N."/>
            <person name="Nishio T."/>
            <person name="Okada M."/>
            <person name="Plessy C."/>
            <person name="Shibata K."/>
            <person name="Shiraki T."/>
            <person name="Suzuki S."/>
            <person name="Tagami M."/>
            <person name="Waki K."/>
            <person name="Watahiki A."/>
            <person name="Okamura-Oho Y."/>
            <person name="Suzuki H."/>
            <person name="Kawai J."/>
            <person name="Hayashizaki Y."/>
        </authorList>
    </citation>
    <scope>NUCLEOTIDE SEQUENCE [LARGE SCALE MRNA]</scope>
    <source>
        <strain>C57BL/6J</strain>
        <tissue>Cecum</tissue>
        <tissue>Head</tissue>
        <tissue>Placenta</tissue>
    </source>
</reference>
<reference key="3">
    <citation type="submission" date="2005-09" db="EMBL/GenBank/DDBJ databases">
        <authorList>
            <person name="Mural R.J."/>
            <person name="Adams M.D."/>
            <person name="Myers E.W."/>
            <person name="Smith H.O."/>
            <person name="Venter J.C."/>
        </authorList>
    </citation>
    <scope>NUCLEOTIDE SEQUENCE [LARGE SCALE GENOMIC DNA]</scope>
</reference>
<reference key="4">
    <citation type="journal article" date="2004" name="Genome Res.">
        <title>The status, quality, and expansion of the NIH full-length cDNA project: the Mammalian Gene Collection (MGC).</title>
        <authorList>
            <consortium name="The MGC Project Team"/>
        </authorList>
    </citation>
    <scope>NUCLEOTIDE SEQUENCE [LARGE SCALE MRNA]</scope>
    <source>
        <strain>FVB/N</strain>
        <tissue>Mammary tumor</tissue>
    </source>
</reference>
<reference key="5">
    <citation type="journal article" date="2010" name="Cell">
        <title>A tissue-specific atlas of mouse protein phosphorylation and expression.</title>
        <authorList>
            <person name="Huttlin E.L."/>
            <person name="Jedrychowski M.P."/>
            <person name="Elias J.E."/>
            <person name="Goswami T."/>
            <person name="Rad R."/>
            <person name="Beausoleil S.A."/>
            <person name="Villen J."/>
            <person name="Haas W."/>
            <person name="Sowa M.E."/>
            <person name="Gygi S.P."/>
        </authorList>
    </citation>
    <scope>IDENTIFICATION BY MASS SPECTROMETRY [LARGE SCALE ANALYSIS]</scope>
    <source>
        <tissue>Brown adipose tissue</tissue>
        <tissue>Heart</tissue>
        <tissue>Pancreas</tissue>
    </source>
</reference>
<sequence>MVCKVLIALCIFTAGLRVQGSPTVPLPVSLMTKSSAPVATWTTSAPHTARATTPVASATHNASVLRTTAASLTSQLPTDHREEAVTSPPLKRDVNSTDSSPAGFPSTSSDGHLAPTPEEHSLGSPEATVPATGSQSPMLLSSQAPTSATTSPATSLSESLSASVTSSHNSTVANIQPTEAPMAPASPTEEHSSSHTPTSHVTAEPVPKEKSPQDTEPGKVICESETTTPFLIMQEVENALSSGSIAAITVTVIAVVLLVFGGAAYLKIRHSSYGRLLDDHDYGSWGNYNNPLYDDS</sequence>
<comment type="function">
    <text evidence="1">May regulate TLP1 expression and telomerase activity, thus enabling certain prostatic cells to resist apoptosis.</text>
</comment>
<comment type="subcellular location">
    <subcellularLocation>
        <location evidence="1">Cell membrane</location>
        <topology evidence="1">Single-pass type I membrane protein</topology>
    </subcellularLocation>
    <subcellularLocation>
        <location evidence="1">Golgi apparatus membrane</location>
        <topology evidence="1">Single-pass type I membrane protein</topology>
    </subcellularLocation>
    <subcellularLocation>
        <location evidence="1">Endosome membrane</location>
        <topology evidence="1">Single-pass type I membrane protein</topology>
    </subcellularLocation>
</comment>
<comment type="PTM">
    <text evidence="1">Highly N-glycosylated and O-glycosylated.</text>
</comment>
<comment type="similarity">
    <text evidence="5">Belongs to the PARM family.</text>
</comment>